<protein>
    <recommendedName>
        <fullName evidence="1">Glutamyl-Q tRNA(Asp) synthetase</fullName>
        <shortName evidence="1">Glu-Q-RSs</shortName>
        <ecNumber evidence="1">6.1.1.-</ecNumber>
    </recommendedName>
</protein>
<keyword id="KW-0030">Aminoacyl-tRNA synthetase</keyword>
<keyword id="KW-0067">ATP-binding</keyword>
<keyword id="KW-0436">Ligase</keyword>
<keyword id="KW-0479">Metal-binding</keyword>
<keyword id="KW-0547">Nucleotide-binding</keyword>
<keyword id="KW-1185">Reference proteome</keyword>
<keyword id="KW-0862">Zinc</keyword>
<evidence type="ECO:0000255" key="1">
    <source>
        <dbReference type="HAMAP-Rule" id="MF_01428"/>
    </source>
</evidence>
<name>GLUQ_RHOBA</name>
<feature type="chain" id="PRO_0000208321" description="Glutamyl-Q tRNA(Asp) synthetase">
    <location>
        <begin position="1"/>
        <end position="329"/>
    </location>
</feature>
<feature type="short sequence motif" description="'HIGH' region">
    <location>
        <begin position="11"/>
        <end position="21"/>
    </location>
</feature>
<feature type="short sequence motif" description="'KMSKS' region">
    <location>
        <begin position="252"/>
        <end position="256"/>
    </location>
</feature>
<feature type="binding site" evidence="1">
    <location>
        <begin position="8"/>
        <end position="12"/>
    </location>
    <ligand>
        <name>L-glutamate</name>
        <dbReference type="ChEBI" id="CHEBI:29985"/>
    </ligand>
</feature>
<feature type="binding site" evidence="1">
    <location>
        <position position="44"/>
    </location>
    <ligand>
        <name>L-glutamate</name>
        <dbReference type="ChEBI" id="CHEBI:29985"/>
    </ligand>
</feature>
<feature type="binding site" evidence="1">
    <location>
        <position position="100"/>
    </location>
    <ligand>
        <name>Zn(2+)</name>
        <dbReference type="ChEBI" id="CHEBI:29105"/>
    </ligand>
</feature>
<feature type="binding site" evidence="1">
    <location>
        <position position="102"/>
    </location>
    <ligand>
        <name>Zn(2+)</name>
        <dbReference type="ChEBI" id="CHEBI:29105"/>
    </ligand>
</feature>
<feature type="binding site" evidence="1">
    <location>
        <position position="129"/>
    </location>
    <ligand>
        <name>Zn(2+)</name>
        <dbReference type="ChEBI" id="CHEBI:29105"/>
    </ligand>
</feature>
<feature type="binding site" evidence="1">
    <location>
        <position position="133"/>
    </location>
    <ligand>
        <name>Zn(2+)</name>
        <dbReference type="ChEBI" id="CHEBI:29105"/>
    </ligand>
</feature>
<feature type="binding site" evidence="1">
    <location>
        <position position="196"/>
    </location>
    <ligand>
        <name>L-glutamate</name>
        <dbReference type="ChEBI" id="CHEBI:29985"/>
    </ligand>
</feature>
<feature type="binding site" evidence="1">
    <location>
        <position position="214"/>
    </location>
    <ligand>
        <name>L-glutamate</name>
        <dbReference type="ChEBI" id="CHEBI:29985"/>
    </ligand>
</feature>
<feature type="binding site" evidence="1">
    <location>
        <position position="255"/>
    </location>
    <ligand>
        <name>ATP</name>
        <dbReference type="ChEBI" id="CHEBI:30616"/>
    </ligand>
</feature>
<proteinExistence type="inferred from homology"/>
<gene>
    <name evidence="1" type="primary">gluQ</name>
    <name type="ordered locus">RB13261</name>
</gene>
<reference key="1">
    <citation type="journal article" date="2003" name="Proc. Natl. Acad. Sci. U.S.A.">
        <title>Complete genome sequence of the marine planctomycete Pirellula sp. strain 1.</title>
        <authorList>
            <person name="Gloeckner F.O."/>
            <person name="Kube M."/>
            <person name="Bauer M."/>
            <person name="Teeling H."/>
            <person name="Lombardot T."/>
            <person name="Ludwig W."/>
            <person name="Gade D."/>
            <person name="Beck A."/>
            <person name="Borzym K."/>
            <person name="Heitmann K."/>
            <person name="Rabus R."/>
            <person name="Schlesner H."/>
            <person name="Amann R."/>
            <person name="Reinhardt R."/>
        </authorList>
    </citation>
    <scope>NUCLEOTIDE SEQUENCE [LARGE SCALE GENOMIC DNA]</scope>
    <source>
        <strain>DSM 10527 / NCIMB 13988 / SH1</strain>
    </source>
</reference>
<organism>
    <name type="scientific">Rhodopirellula baltica (strain DSM 10527 / NCIMB 13988 / SH1)</name>
    <dbReference type="NCBI Taxonomy" id="243090"/>
    <lineage>
        <taxon>Bacteria</taxon>
        <taxon>Pseudomonadati</taxon>
        <taxon>Planctomycetota</taxon>
        <taxon>Planctomycetia</taxon>
        <taxon>Pirellulales</taxon>
        <taxon>Pirellulaceae</taxon>
        <taxon>Rhodopirellula</taxon>
    </lineage>
</organism>
<accession>Q7UHE2</accession>
<comment type="function">
    <text evidence="1">Catalyzes the tRNA-independent activation of glutamate in presence of ATP and the subsequent transfer of glutamate onto a tRNA(Asp). Glutamate is transferred on the 2-amino-5-(4,5-dihydroxy-2-cyclopenten-1-yl) moiety of the queuosine in the wobble position of the QUC anticodon.</text>
</comment>
<comment type="cofactor">
    <cofactor evidence="1">
        <name>Zn(2+)</name>
        <dbReference type="ChEBI" id="CHEBI:29105"/>
    </cofactor>
    <text evidence="1">Binds 1 zinc ion per subunit.</text>
</comment>
<comment type="similarity">
    <text evidence="1">Belongs to the class-I aminoacyl-tRNA synthetase family. GluQ subfamily.</text>
</comment>
<dbReference type="EC" id="6.1.1.-" evidence="1"/>
<dbReference type="EMBL" id="BX294156">
    <property type="protein sequence ID" value="CAD78030.1"/>
    <property type="molecule type" value="Genomic_DNA"/>
</dbReference>
<dbReference type="RefSeq" id="NP_870952.1">
    <property type="nucleotide sequence ID" value="NC_005027.1"/>
</dbReference>
<dbReference type="SMR" id="Q7UHE2"/>
<dbReference type="STRING" id="243090.RB13261"/>
<dbReference type="EnsemblBacteria" id="CAD78030">
    <property type="protein sequence ID" value="CAD78030"/>
    <property type="gene ID" value="RB13261"/>
</dbReference>
<dbReference type="KEGG" id="rba:RB13261"/>
<dbReference type="PATRIC" id="fig|243090.15.peg.6424"/>
<dbReference type="eggNOG" id="COG0008">
    <property type="taxonomic scope" value="Bacteria"/>
</dbReference>
<dbReference type="HOGENOM" id="CLU_015768_0_0_0"/>
<dbReference type="InParanoid" id="Q7UHE2"/>
<dbReference type="OrthoDB" id="9807503at2"/>
<dbReference type="Proteomes" id="UP000001025">
    <property type="component" value="Chromosome"/>
</dbReference>
<dbReference type="GO" id="GO:0005829">
    <property type="term" value="C:cytosol"/>
    <property type="evidence" value="ECO:0000318"/>
    <property type="project" value="GO_Central"/>
</dbReference>
<dbReference type="GO" id="GO:0005524">
    <property type="term" value="F:ATP binding"/>
    <property type="evidence" value="ECO:0007669"/>
    <property type="project" value="UniProtKB-KW"/>
</dbReference>
<dbReference type="GO" id="GO:0004818">
    <property type="term" value="F:glutamate-tRNA ligase activity"/>
    <property type="evidence" value="ECO:0000318"/>
    <property type="project" value="GO_Central"/>
</dbReference>
<dbReference type="GO" id="GO:0008270">
    <property type="term" value="F:zinc ion binding"/>
    <property type="evidence" value="ECO:0007669"/>
    <property type="project" value="UniProtKB-UniRule"/>
</dbReference>
<dbReference type="GO" id="GO:0006424">
    <property type="term" value="P:glutamyl-tRNA aminoacylation"/>
    <property type="evidence" value="ECO:0000318"/>
    <property type="project" value="GO_Central"/>
</dbReference>
<dbReference type="GO" id="GO:0006400">
    <property type="term" value="P:tRNA modification"/>
    <property type="evidence" value="ECO:0007669"/>
    <property type="project" value="InterPro"/>
</dbReference>
<dbReference type="FunFam" id="3.40.50.620:FF:000537">
    <property type="entry name" value="Glutamyl-Q tRNA(Asp) synthetase"/>
    <property type="match status" value="1"/>
</dbReference>
<dbReference type="Gene3D" id="3.40.50.620">
    <property type="entry name" value="HUPs"/>
    <property type="match status" value="1"/>
</dbReference>
<dbReference type="HAMAP" id="MF_01428">
    <property type="entry name" value="Glu_Q_tRNA_synth"/>
    <property type="match status" value="1"/>
</dbReference>
<dbReference type="InterPro" id="IPR022380">
    <property type="entry name" value="Glu-Q_tRNA(Asp)_Synthase"/>
</dbReference>
<dbReference type="InterPro" id="IPR000924">
    <property type="entry name" value="Glu/Gln-tRNA-synth"/>
</dbReference>
<dbReference type="InterPro" id="IPR020058">
    <property type="entry name" value="Glu/Gln-tRNA-synth_Ib_cat-dom"/>
</dbReference>
<dbReference type="InterPro" id="IPR049940">
    <property type="entry name" value="GluQ/Sye"/>
</dbReference>
<dbReference type="InterPro" id="IPR014729">
    <property type="entry name" value="Rossmann-like_a/b/a_fold"/>
</dbReference>
<dbReference type="NCBIfam" id="NF004315">
    <property type="entry name" value="PRK05710.1-4"/>
    <property type="match status" value="1"/>
</dbReference>
<dbReference type="PANTHER" id="PTHR43311">
    <property type="entry name" value="GLUTAMATE--TRNA LIGASE"/>
    <property type="match status" value="1"/>
</dbReference>
<dbReference type="PANTHER" id="PTHR43311:SF1">
    <property type="entry name" value="GLUTAMYL-Q TRNA(ASP) SYNTHETASE"/>
    <property type="match status" value="1"/>
</dbReference>
<dbReference type="Pfam" id="PF00749">
    <property type="entry name" value="tRNA-synt_1c"/>
    <property type="match status" value="1"/>
</dbReference>
<dbReference type="PRINTS" id="PR00987">
    <property type="entry name" value="TRNASYNTHGLU"/>
</dbReference>
<dbReference type="SUPFAM" id="SSF52374">
    <property type="entry name" value="Nucleotidylyl transferase"/>
    <property type="match status" value="1"/>
</dbReference>
<sequence length="329" mass="36753">MMSSAVCRLAPSPTGAQHLGNARTFLIAYWSARAQNARLILRIEDIDSPRIKPWATEQAITDLRWLGMDWDGDPIVQTERSPLYDEARNQLMDADRVYPCSCTRRDIEAAASAPHESEASGWTPDAPVYPGTCASWKNGDPLPEDKPFCFRFRMQATPDRFFDRVHGEVACNPIQDIGDFPITRKAESAADCLAAYQLAVVVDDIDAGVTEVVRGDDLILSTFRQLQLYEALGHSPPSHAHVPLVTGTDGRRLAKRHGDTRLSHFREQGMPPETIVRWAAKSSGLCPDSDAALSERTLDQIHQQMIDRFDWVRIHRQPTVVDDFGSTTD</sequence>